<reference key="1">
    <citation type="journal article" date="2005" name="Nucleic Acids Res.">
        <title>The genome sequence of Salmonella enterica serovar Choleraesuis, a highly invasive and resistant zoonotic pathogen.</title>
        <authorList>
            <person name="Chiu C.-H."/>
            <person name="Tang P."/>
            <person name="Chu C."/>
            <person name="Hu S."/>
            <person name="Bao Q."/>
            <person name="Yu J."/>
            <person name="Chou Y.-Y."/>
            <person name="Wang H.-S."/>
            <person name="Lee Y.-S."/>
        </authorList>
    </citation>
    <scope>NUCLEOTIDE SEQUENCE [LARGE SCALE GENOMIC DNA]</scope>
    <source>
        <strain>SC-B67</strain>
    </source>
</reference>
<keyword id="KW-0378">Hydrolase</keyword>
<keyword id="KW-0719">Serine esterase</keyword>
<organism>
    <name type="scientific">Salmonella choleraesuis (strain SC-B67)</name>
    <dbReference type="NCBI Taxonomy" id="321314"/>
    <lineage>
        <taxon>Bacteria</taxon>
        <taxon>Pseudomonadati</taxon>
        <taxon>Pseudomonadota</taxon>
        <taxon>Gammaproteobacteria</taxon>
        <taxon>Enterobacterales</taxon>
        <taxon>Enterobacteriaceae</taxon>
        <taxon>Salmonella</taxon>
    </lineage>
</organism>
<accession>Q57ST6</accession>
<proteinExistence type="inferred from homology"/>
<name>FRSA_SALCH</name>
<evidence type="ECO:0000255" key="1">
    <source>
        <dbReference type="HAMAP-Rule" id="MF_01063"/>
    </source>
</evidence>
<gene>
    <name evidence="1" type="primary">frsA</name>
    <name type="ordered locus">SCH_0319</name>
</gene>
<protein>
    <recommendedName>
        <fullName evidence="1">Esterase FrsA</fullName>
        <ecNumber evidence="1">3.1.1.1</ecNumber>
    </recommendedName>
</protein>
<feature type="chain" id="PRO_1000064485" description="Esterase FrsA">
    <location>
        <begin position="1"/>
        <end position="414"/>
    </location>
</feature>
<sequence length="414" mass="47160">MTQANLSETLFKPRFKHTETSTLVRRFNRGSQPPMQSALDGKNVPHWYRMINRLMWIWRGVDPREILDVQARIVMSDAERTDDDLYDTVIGYRGGNWIYEWAKQAMDWQQKACQEQDAMRSGRYWLHASTLYNIAAYPHLKGDELAEQAQALANRAYEEAAQRLPGSLREMEFAVPGGSPVTAFLHMPKGDGPFPTVLMCGGLDAMQTDYYTLYERYFAPRGIAMLTLDMPSVGFSSKWKLTQDSSLLHQHVLKALPNVPWVDHTRVAAFGFRFGANVAVRLAYLEAPRLKAVACLGPVVHALLSDPQRQSTVPEMYLDVLASRLGMHDASDEALRVELNRYSLKVQGLLGRRCPTPMLSGFWKNDPFSPEEESRLITTSSSDGKLIEIPFNPVYRNFDRALQEITDWINHRLC</sequence>
<dbReference type="EC" id="3.1.1.1" evidence="1"/>
<dbReference type="EMBL" id="AE017220">
    <property type="protein sequence ID" value="AAX64225.1"/>
    <property type="molecule type" value="Genomic_DNA"/>
</dbReference>
<dbReference type="RefSeq" id="WP_000189588.1">
    <property type="nucleotide sequence ID" value="NC_006905.1"/>
</dbReference>
<dbReference type="SMR" id="Q57ST6"/>
<dbReference type="ESTHER" id="salty-yafa">
    <property type="family name" value="Duf_1100-R"/>
</dbReference>
<dbReference type="KEGG" id="sec:SCH_0319"/>
<dbReference type="HOGENOM" id="CLU_036819_0_0_6"/>
<dbReference type="Proteomes" id="UP000000538">
    <property type="component" value="Chromosome"/>
</dbReference>
<dbReference type="GO" id="GO:0106435">
    <property type="term" value="F:carboxylesterase activity"/>
    <property type="evidence" value="ECO:0007669"/>
    <property type="project" value="UniProtKB-EC"/>
</dbReference>
<dbReference type="FunFam" id="3.40.50.1820:FF:000022">
    <property type="entry name" value="Esterase FrsA"/>
    <property type="match status" value="1"/>
</dbReference>
<dbReference type="Gene3D" id="3.40.50.1820">
    <property type="entry name" value="alpha/beta hydrolase"/>
    <property type="match status" value="1"/>
</dbReference>
<dbReference type="HAMAP" id="MF_01063">
    <property type="entry name" value="FrsA"/>
    <property type="match status" value="1"/>
</dbReference>
<dbReference type="InterPro" id="IPR029058">
    <property type="entry name" value="AB_hydrolase_fold"/>
</dbReference>
<dbReference type="InterPro" id="IPR043423">
    <property type="entry name" value="FrsA"/>
</dbReference>
<dbReference type="InterPro" id="IPR010520">
    <property type="entry name" value="FrsA-like"/>
</dbReference>
<dbReference type="InterPro" id="IPR050261">
    <property type="entry name" value="FrsA_esterase"/>
</dbReference>
<dbReference type="NCBIfam" id="NF003460">
    <property type="entry name" value="PRK05077.1"/>
    <property type="match status" value="1"/>
</dbReference>
<dbReference type="PANTHER" id="PTHR22946">
    <property type="entry name" value="DIENELACTONE HYDROLASE DOMAIN-CONTAINING PROTEIN-RELATED"/>
    <property type="match status" value="1"/>
</dbReference>
<dbReference type="PANTHER" id="PTHR22946:SF4">
    <property type="entry name" value="ESTERASE FRSA"/>
    <property type="match status" value="1"/>
</dbReference>
<dbReference type="Pfam" id="PF06500">
    <property type="entry name" value="FrsA-like"/>
    <property type="match status" value="1"/>
</dbReference>
<dbReference type="SUPFAM" id="SSF53474">
    <property type="entry name" value="alpha/beta-Hydrolases"/>
    <property type="match status" value="1"/>
</dbReference>
<comment type="function">
    <text evidence="1">Catalyzes the hydrolysis of esters.</text>
</comment>
<comment type="catalytic activity">
    <reaction evidence="1">
        <text>a carboxylic ester + H2O = an alcohol + a carboxylate + H(+)</text>
        <dbReference type="Rhea" id="RHEA:21164"/>
        <dbReference type="ChEBI" id="CHEBI:15377"/>
        <dbReference type="ChEBI" id="CHEBI:15378"/>
        <dbReference type="ChEBI" id="CHEBI:29067"/>
        <dbReference type="ChEBI" id="CHEBI:30879"/>
        <dbReference type="ChEBI" id="CHEBI:33308"/>
        <dbReference type="EC" id="3.1.1.1"/>
    </reaction>
</comment>
<comment type="similarity">
    <text evidence="1">Belongs to the FrsA family.</text>
</comment>